<gene>
    <name evidence="4" type="primary">AGM2</name>
    <name evidence="6" type="ordered locus">At1g67330</name>
    <name evidence="7" type="ORF">F1N21.15</name>
</gene>
<sequence length="291" mass="32474">MIQDKSKGAKQTLLERPWFLAVALAGLIGGAMLITSFIRATDNTLSLCSTAKNTAASIAKYTATPIQLQSIVHYATSHTVPQQSFEEISISLNVLKERLPCNFLVFGLGRDSLMWASLNPGGTTVFLEEDPEWIEAVLKDAPSLRAHHVQYRTHLSEAGRLLSTYKNEPMCLPAKAFPIRYNEKCPLALTSLPDEFYDTEWDLIMVDAPKGYFPEAPGRMAAIFSSAIMARNRKGDGTTHVFLHDVNRKVENAFANEFLCEKYKVNSVGRLWHFEIPNAANMTDQPGDRFC</sequence>
<accession>Q9FYG0</accession>
<proteinExistence type="evidence at protein level"/>
<protein>
    <recommendedName>
        <fullName evidence="4">Arabinogalactan O-methyltransferase 2</fullName>
        <ecNumber evidence="3">2.1.1.-</ecNumber>
    </recommendedName>
</protein>
<organism>
    <name type="scientific">Arabidopsis thaliana</name>
    <name type="common">Mouse-ear cress</name>
    <dbReference type="NCBI Taxonomy" id="3702"/>
    <lineage>
        <taxon>Eukaryota</taxon>
        <taxon>Viridiplantae</taxon>
        <taxon>Streptophyta</taxon>
        <taxon>Embryophyta</taxon>
        <taxon>Tracheophyta</taxon>
        <taxon>Spermatophyta</taxon>
        <taxon>Magnoliopsida</taxon>
        <taxon>eudicotyledons</taxon>
        <taxon>Gunneridae</taxon>
        <taxon>Pentapetalae</taxon>
        <taxon>rosids</taxon>
        <taxon>malvids</taxon>
        <taxon>Brassicales</taxon>
        <taxon>Brassicaceae</taxon>
        <taxon>Camelineae</taxon>
        <taxon>Arabidopsis</taxon>
    </lineage>
</organism>
<name>AGM2_ARATH</name>
<reference key="1">
    <citation type="journal article" date="2000" name="Nature">
        <title>Sequence and analysis of chromosome 1 of the plant Arabidopsis thaliana.</title>
        <authorList>
            <person name="Theologis A."/>
            <person name="Ecker J.R."/>
            <person name="Palm C.J."/>
            <person name="Federspiel N.A."/>
            <person name="Kaul S."/>
            <person name="White O."/>
            <person name="Alonso J."/>
            <person name="Altafi H."/>
            <person name="Araujo R."/>
            <person name="Bowman C.L."/>
            <person name="Brooks S.Y."/>
            <person name="Buehler E."/>
            <person name="Chan A."/>
            <person name="Chao Q."/>
            <person name="Chen H."/>
            <person name="Cheuk R.F."/>
            <person name="Chin C.W."/>
            <person name="Chung M.K."/>
            <person name="Conn L."/>
            <person name="Conway A.B."/>
            <person name="Conway A.R."/>
            <person name="Creasy T.H."/>
            <person name="Dewar K."/>
            <person name="Dunn P."/>
            <person name="Etgu P."/>
            <person name="Feldblyum T.V."/>
            <person name="Feng J.-D."/>
            <person name="Fong B."/>
            <person name="Fujii C.Y."/>
            <person name="Gill J.E."/>
            <person name="Goldsmith A.D."/>
            <person name="Haas B."/>
            <person name="Hansen N.F."/>
            <person name="Hughes B."/>
            <person name="Huizar L."/>
            <person name="Hunter J.L."/>
            <person name="Jenkins J."/>
            <person name="Johnson-Hopson C."/>
            <person name="Khan S."/>
            <person name="Khaykin E."/>
            <person name="Kim C.J."/>
            <person name="Koo H.L."/>
            <person name="Kremenetskaia I."/>
            <person name="Kurtz D.B."/>
            <person name="Kwan A."/>
            <person name="Lam B."/>
            <person name="Langin-Hooper S."/>
            <person name="Lee A."/>
            <person name="Lee J.M."/>
            <person name="Lenz C.A."/>
            <person name="Li J.H."/>
            <person name="Li Y.-P."/>
            <person name="Lin X."/>
            <person name="Liu S.X."/>
            <person name="Liu Z.A."/>
            <person name="Luros J.S."/>
            <person name="Maiti R."/>
            <person name="Marziali A."/>
            <person name="Militscher J."/>
            <person name="Miranda M."/>
            <person name="Nguyen M."/>
            <person name="Nierman W.C."/>
            <person name="Osborne B.I."/>
            <person name="Pai G."/>
            <person name="Peterson J."/>
            <person name="Pham P.K."/>
            <person name="Rizzo M."/>
            <person name="Rooney T."/>
            <person name="Rowley D."/>
            <person name="Sakano H."/>
            <person name="Salzberg S.L."/>
            <person name="Schwartz J.R."/>
            <person name="Shinn P."/>
            <person name="Southwick A.M."/>
            <person name="Sun H."/>
            <person name="Tallon L.J."/>
            <person name="Tambunga G."/>
            <person name="Toriumi M.J."/>
            <person name="Town C.D."/>
            <person name="Utterback T."/>
            <person name="Van Aken S."/>
            <person name="Vaysberg M."/>
            <person name="Vysotskaia V.S."/>
            <person name="Walker M."/>
            <person name="Wu D."/>
            <person name="Yu G."/>
            <person name="Fraser C.M."/>
            <person name="Venter J.C."/>
            <person name="Davis R.W."/>
        </authorList>
    </citation>
    <scope>NUCLEOTIDE SEQUENCE [LARGE SCALE GENOMIC DNA]</scope>
    <source>
        <strain>cv. Columbia</strain>
    </source>
</reference>
<reference key="2">
    <citation type="journal article" date="2017" name="Plant J.">
        <title>Araport11: a complete reannotation of the Arabidopsis thaliana reference genome.</title>
        <authorList>
            <person name="Cheng C.Y."/>
            <person name="Krishnakumar V."/>
            <person name="Chan A.P."/>
            <person name="Thibaud-Nissen F."/>
            <person name="Schobel S."/>
            <person name="Town C.D."/>
        </authorList>
    </citation>
    <scope>GENOME REANNOTATION</scope>
    <source>
        <strain>cv. Columbia</strain>
    </source>
</reference>
<reference key="3">
    <citation type="submission" date="2004-03" db="EMBL/GenBank/DDBJ databases">
        <title>Arabidopsis ORF clones.</title>
        <authorList>
            <person name="Kim C.J."/>
            <person name="Chen H."/>
            <person name="Cheuk R.F."/>
            <person name="Shinn P."/>
            <person name="Ecker J.R."/>
        </authorList>
    </citation>
    <scope>NUCLEOTIDE SEQUENCE [LARGE SCALE MRNA]</scope>
    <source>
        <strain>cv. Columbia</strain>
    </source>
</reference>
<reference key="4">
    <citation type="submission" date="2006-07" db="EMBL/GenBank/DDBJ databases">
        <title>Large-scale analysis of RIKEN Arabidopsis full-length (RAFL) cDNAs.</title>
        <authorList>
            <person name="Totoki Y."/>
            <person name="Seki M."/>
            <person name="Ishida J."/>
            <person name="Nakajima M."/>
            <person name="Enju A."/>
            <person name="Kamiya A."/>
            <person name="Narusaka M."/>
            <person name="Shin-i T."/>
            <person name="Nakagawa M."/>
            <person name="Sakamoto N."/>
            <person name="Oishi K."/>
            <person name="Kohara Y."/>
            <person name="Kobayashi M."/>
            <person name="Toyoda A."/>
            <person name="Sakaki Y."/>
            <person name="Sakurai T."/>
            <person name="Iida K."/>
            <person name="Akiyama K."/>
            <person name="Satou M."/>
            <person name="Toyoda T."/>
            <person name="Konagaya A."/>
            <person name="Carninci P."/>
            <person name="Kawai J."/>
            <person name="Hayashizaki Y."/>
            <person name="Shinozaki K."/>
        </authorList>
    </citation>
    <scope>NUCLEOTIDE SEQUENCE [LARGE SCALE MRNA]</scope>
    <source>
        <strain>cv. Columbia</strain>
    </source>
</reference>
<reference key="5">
    <citation type="journal article" date="2019" name="Plant Direct">
        <title>Two members of the DUF579 family are responsible for arabinogalactan methylation in Arabidopsis.</title>
        <authorList>
            <person name="Temple H."/>
            <person name="Mortimer J.C."/>
            <person name="Tryfona T."/>
            <person name="Yu X."/>
            <person name="Lopez-Hernandez F."/>
            <person name="Sorieul M."/>
            <person name="Anders N."/>
            <person name="Dupree P."/>
        </authorList>
    </citation>
    <scope>FUNCTION</scope>
    <scope>CATALYTIC ACTIVITY</scope>
    <scope>DISRUPTION PHENOTYPE</scope>
</reference>
<comment type="function">
    <text evidence="3">Involved in the methylation of glucuronic acid of different plant cell wall component, but mainly on side chains of arabinogalactans.</text>
</comment>
<comment type="subcellular location">
    <subcellularLocation>
        <location evidence="1">Golgi apparatus membrane</location>
        <topology evidence="2">Single-pass membrane protein</topology>
    </subcellularLocation>
</comment>
<comment type="disruption phenotype">
    <text evidence="3">The double mutant agm1 and agm2 results in the absence of methylation on arabinogalactan glucoronic acid side chains.</text>
</comment>
<comment type="similarity">
    <text evidence="5">Belongs to the methyltransferase superfamily.</text>
</comment>
<feature type="chain" id="PRO_0000458145" description="Arabinogalactan O-methyltransferase 2">
    <location>
        <begin position="1"/>
        <end position="291"/>
    </location>
</feature>
<feature type="transmembrane region" description="Helical" evidence="2">
    <location>
        <begin position="18"/>
        <end position="38"/>
    </location>
</feature>
<evidence type="ECO:0000250" key="1">
    <source>
        <dbReference type="UniProtKB" id="Q9C7F9"/>
    </source>
</evidence>
<evidence type="ECO:0000255" key="2"/>
<evidence type="ECO:0000269" key="3">
    <source>
    </source>
</evidence>
<evidence type="ECO:0000303" key="4">
    <source>
    </source>
</evidence>
<evidence type="ECO:0000305" key="5"/>
<evidence type="ECO:0000312" key="6">
    <source>
        <dbReference type="Araport" id="AT1G67330"/>
    </source>
</evidence>
<evidence type="ECO:0000312" key="7">
    <source>
        <dbReference type="EMBL" id="AAG00240.1"/>
    </source>
</evidence>
<keyword id="KW-0333">Golgi apparatus</keyword>
<keyword id="KW-0472">Membrane</keyword>
<keyword id="KW-0489">Methyltransferase</keyword>
<keyword id="KW-1185">Reference proteome</keyword>
<keyword id="KW-0808">Transferase</keyword>
<keyword id="KW-0812">Transmembrane</keyword>
<keyword id="KW-1133">Transmembrane helix</keyword>
<dbReference type="EC" id="2.1.1.-" evidence="3"/>
<dbReference type="EMBL" id="AC002130">
    <property type="protein sequence ID" value="AAG00240.1"/>
    <property type="molecule type" value="Genomic_DNA"/>
</dbReference>
<dbReference type="EMBL" id="CP002684">
    <property type="protein sequence ID" value="AEE34632.1"/>
    <property type="molecule type" value="Genomic_DNA"/>
</dbReference>
<dbReference type="EMBL" id="BT011227">
    <property type="protein sequence ID" value="AAR92263.1"/>
    <property type="molecule type" value="mRNA"/>
</dbReference>
<dbReference type="EMBL" id="BT012155">
    <property type="protein sequence ID" value="AAS76250.1"/>
    <property type="molecule type" value="mRNA"/>
</dbReference>
<dbReference type="EMBL" id="AK227306">
    <property type="protein sequence ID" value="BAE99322.1"/>
    <property type="molecule type" value="mRNA"/>
</dbReference>
<dbReference type="RefSeq" id="NP_176901.1">
    <property type="nucleotide sequence ID" value="NM_105401.3"/>
</dbReference>
<dbReference type="FunCoup" id="Q9FYG0">
    <property type="interactions" value="253"/>
</dbReference>
<dbReference type="STRING" id="3702.Q9FYG0"/>
<dbReference type="PaxDb" id="3702-AT1G67330.1"/>
<dbReference type="ProteomicsDB" id="188012"/>
<dbReference type="EnsemblPlants" id="AT1G67330.1">
    <property type="protein sequence ID" value="AT1G67330.1"/>
    <property type="gene ID" value="AT1G67330"/>
</dbReference>
<dbReference type="GeneID" id="843054"/>
<dbReference type="Gramene" id="AT1G67330.1">
    <property type="protein sequence ID" value="AT1G67330.1"/>
    <property type="gene ID" value="AT1G67330"/>
</dbReference>
<dbReference type="KEGG" id="ath:AT1G67330"/>
<dbReference type="Araport" id="AT1G67330"/>
<dbReference type="TAIR" id="AT1G67330">
    <property type="gene designation" value="AGM2"/>
</dbReference>
<dbReference type="eggNOG" id="ENOG502QST5">
    <property type="taxonomic scope" value="Eukaryota"/>
</dbReference>
<dbReference type="HOGENOM" id="CLU_053427_1_0_1"/>
<dbReference type="InParanoid" id="Q9FYG0"/>
<dbReference type="OMA" id="FIRATDN"/>
<dbReference type="PRO" id="PR:Q9FYG0"/>
<dbReference type="Proteomes" id="UP000006548">
    <property type="component" value="Chromosome 1"/>
</dbReference>
<dbReference type="ExpressionAtlas" id="Q9FYG0">
    <property type="expression patterns" value="baseline and differential"/>
</dbReference>
<dbReference type="GO" id="GO:0005768">
    <property type="term" value="C:endosome"/>
    <property type="evidence" value="ECO:0007005"/>
    <property type="project" value="TAIR"/>
</dbReference>
<dbReference type="GO" id="GO:0005794">
    <property type="term" value="C:Golgi apparatus"/>
    <property type="evidence" value="ECO:0007005"/>
    <property type="project" value="TAIR"/>
</dbReference>
<dbReference type="GO" id="GO:0000139">
    <property type="term" value="C:Golgi membrane"/>
    <property type="evidence" value="ECO:0007669"/>
    <property type="project" value="UniProtKB-SubCell"/>
</dbReference>
<dbReference type="GO" id="GO:0005802">
    <property type="term" value="C:trans-Golgi network"/>
    <property type="evidence" value="ECO:0007005"/>
    <property type="project" value="TAIR"/>
</dbReference>
<dbReference type="GO" id="GO:0030775">
    <property type="term" value="F:glucuronoxylan 4-O-methyltransferase activity"/>
    <property type="evidence" value="ECO:0000316"/>
    <property type="project" value="TAIR"/>
</dbReference>
<dbReference type="GO" id="GO:0009827">
    <property type="term" value="P:plant-type cell wall modification"/>
    <property type="evidence" value="ECO:0000316"/>
    <property type="project" value="TAIR"/>
</dbReference>
<dbReference type="GO" id="GO:0006479">
    <property type="term" value="P:protein methylation"/>
    <property type="evidence" value="ECO:0000316"/>
    <property type="project" value="TAIR"/>
</dbReference>
<dbReference type="GO" id="GO:0045492">
    <property type="term" value="P:xylan biosynthetic process"/>
    <property type="evidence" value="ECO:0007669"/>
    <property type="project" value="InterPro"/>
</dbReference>
<dbReference type="FunFam" id="3.40.50.150:FF:000263">
    <property type="entry name" value="Putative methyltransferase"/>
    <property type="match status" value="1"/>
</dbReference>
<dbReference type="Gene3D" id="3.40.50.150">
    <property type="entry name" value="Vaccinia Virus protein VP39"/>
    <property type="match status" value="1"/>
</dbReference>
<dbReference type="InterPro" id="IPR006514">
    <property type="entry name" value="IRX15/GXM/AGM"/>
</dbReference>
<dbReference type="InterPro" id="IPR029063">
    <property type="entry name" value="SAM-dependent_MTases_sf"/>
</dbReference>
<dbReference type="NCBIfam" id="TIGR01627">
    <property type="entry name" value="A_thal_3515"/>
    <property type="match status" value="1"/>
</dbReference>
<dbReference type="PANTHER" id="PTHR31444">
    <property type="entry name" value="OS11G0490100 PROTEIN"/>
    <property type="match status" value="1"/>
</dbReference>
<dbReference type="Pfam" id="PF21729">
    <property type="entry name" value="IRX15_IRX15L_GXM"/>
    <property type="match status" value="1"/>
</dbReference>